<sequence length="213" mass="22901">MAGRHALVWLRADAPSQALTPGAQPRLQAWFAAGFPAVVARRDGAEQPGQVRLGVPLPPAQGKQRIALCAQVSDIARSVPALALPEVISHAPPQWQAALHALQAQATAIGMQPRVFGSFAFQAVTGLPYVHAASDVDLLWTLDTPTQAHAVVTLLQQWEHVTARRADGELLLPDGNAVNWREYAGDAQQVLVKRNDGCRLLPRTALFPERCAA</sequence>
<comment type="function">
    <text evidence="1">Transfers 2'-(5-triphosphoribosyl)-3'-dephosphocoenzyme-A to the apo-[acyl-carrier-protein] of the malonate decarboxylase to yield holo-[acyl-carrier-protein].</text>
</comment>
<comment type="catalytic activity">
    <reaction evidence="1">
        <text>apo-[malonate decarboxylase ACP] + 2'-(5''-triphospho-alpha-D-ribosyl)-3'-dephospho-CoA = holo-[malonate decarboxylase ACP] + diphosphate</text>
        <dbReference type="Rhea" id="RHEA:42644"/>
        <dbReference type="Rhea" id="RHEA-COMP:10160"/>
        <dbReference type="Rhea" id="RHEA-COMP:10161"/>
        <dbReference type="ChEBI" id="CHEBI:29999"/>
        <dbReference type="ChEBI" id="CHEBI:33019"/>
        <dbReference type="ChEBI" id="CHEBI:61378"/>
        <dbReference type="ChEBI" id="CHEBI:82683"/>
        <dbReference type="EC" id="2.7.7.66"/>
    </reaction>
</comment>
<comment type="similarity">
    <text evidence="1">Belongs to the MdcG family.</text>
</comment>
<evidence type="ECO:0000255" key="1">
    <source>
        <dbReference type="HAMAP-Rule" id="MF_00650"/>
    </source>
</evidence>
<keyword id="KW-0548">Nucleotidyltransferase</keyword>
<keyword id="KW-0808">Transferase</keyword>
<organism>
    <name type="scientific">Xanthomonas campestris pv. campestris (strain 8004)</name>
    <dbReference type="NCBI Taxonomy" id="314565"/>
    <lineage>
        <taxon>Bacteria</taxon>
        <taxon>Pseudomonadati</taxon>
        <taxon>Pseudomonadota</taxon>
        <taxon>Gammaproteobacteria</taxon>
        <taxon>Lysobacterales</taxon>
        <taxon>Lysobacteraceae</taxon>
        <taxon>Xanthomonas</taxon>
    </lineage>
</organism>
<protein>
    <recommendedName>
        <fullName evidence="1">Phosphoribosyl-dephospho-CoA transferase</fullName>
        <ecNumber evidence="1">2.7.7.66</ecNumber>
    </recommendedName>
    <alternativeName>
        <fullName evidence="1">Malonate decarboxylase holo-[acyl-carrier-protein] synthase</fullName>
        <shortName evidence="1">Holo-ACP synthase</shortName>
    </alternativeName>
</protein>
<name>MDCG_XANC8</name>
<reference key="1">
    <citation type="journal article" date="2005" name="Genome Res.">
        <title>Comparative and functional genomic analyses of the pathogenicity of phytopathogen Xanthomonas campestris pv. campestris.</title>
        <authorList>
            <person name="Qian W."/>
            <person name="Jia Y."/>
            <person name="Ren S.-X."/>
            <person name="He Y.-Q."/>
            <person name="Feng J.-X."/>
            <person name="Lu L.-F."/>
            <person name="Sun Q."/>
            <person name="Ying G."/>
            <person name="Tang D.-J."/>
            <person name="Tang H."/>
            <person name="Wu W."/>
            <person name="Hao P."/>
            <person name="Wang L."/>
            <person name="Jiang B.-L."/>
            <person name="Zeng S."/>
            <person name="Gu W.-Y."/>
            <person name="Lu G."/>
            <person name="Rong L."/>
            <person name="Tian Y."/>
            <person name="Yao Z."/>
            <person name="Fu G."/>
            <person name="Chen B."/>
            <person name="Fang R."/>
            <person name="Qiang B."/>
            <person name="Chen Z."/>
            <person name="Zhao G.-P."/>
            <person name="Tang J.-L."/>
            <person name="He C."/>
        </authorList>
    </citation>
    <scope>NUCLEOTIDE SEQUENCE [LARGE SCALE GENOMIC DNA]</scope>
    <source>
        <strain>8004</strain>
    </source>
</reference>
<feature type="chain" id="PRO_1000061475" description="Phosphoribosyl-dephospho-CoA transferase">
    <location>
        <begin position="1"/>
        <end position="213"/>
    </location>
</feature>
<feature type="active site" evidence="1">
    <location>
        <position position="135"/>
    </location>
</feature>
<feature type="active site" evidence="1">
    <location>
        <position position="137"/>
    </location>
</feature>
<gene>
    <name evidence="1" type="primary">mdcG</name>
    <name type="ordered locus">XC_0576</name>
</gene>
<dbReference type="EC" id="2.7.7.66" evidence="1"/>
<dbReference type="EMBL" id="CP000050">
    <property type="protein sequence ID" value="AAY47657.1"/>
    <property type="molecule type" value="Genomic_DNA"/>
</dbReference>
<dbReference type="RefSeq" id="WP_011038697.1">
    <property type="nucleotide sequence ID" value="NZ_CP155948.1"/>
</dbReference>
<dbReference type="KEGG" id="xcb:XC_0576"/>
<dbReference type="HOGENOM" id="CLU_075747_0_1_6"/>
<dbReference type="Proteomes" id="UP000000420">
    <property type="component" value="Chromosome"/>
</dbReference>
<dbReference type="GO" id="GO:0016779">
    <property type="term" value="F:nucleotidyltransferase activity"/>
    <property type="evidence" value="ECO:0007669"/>
    <property type="project" value="UniProtKB-UniRule"/>
</dbReference>
<dbReference type="HAMAP" id="MF_00650">
    <property type="entry name" value="Malonate_MdcG"/>
    <property type="match status" value="1"/>
</dbReference>
<dbReference type="InterPro" id="IPR017557">
    <property type="entry name" value="Holo-ACP_synthase"/>
</dbReference>
<dbReference type="InterPro" id="IPR049180">
    <property type="entry name" value="MdcG_C"/>
</dbReference>
<dbReference type="InterPro" id="IPR048903">
    <property type="entry name" value="MdcG_N"/>
</dbReference>
<dbReference type="NCBIfam" id="TIGR03135">
    <property type="entry name" value="malonate_mdcG"/>
    <property type="match status" value="1"/>
</dbReference>
<dbReference type="Pfam" id="PF10620">
    <property type="entry name" value="MdcG"/>
    <property type="match status" value="1"/>
</dbReference>
<dbReference type="Pfam" id="PF20866">
    <property type="entry name" value="MdcG_N"/>
    <property type="match status" value="1"/>
</dbReference>
<proteinExistence type="inferred from homology"/>
<accession>Q4UZ66</accession>